<protein>
    <recommendedName>
        <fullName>Protein zntD</fullName>
    </recommendedName>
</protein>
<comment type="function">
    <text evidence="1 4">May transport divalent cations (By similarity). May participate, with dstA, in the regulation of the differentiation of stalk cells during development.</text>
</comment>
<comment type="subcellular location">
    <subcellularLocation>
        <location evidence="5">Membrane</location>
        <topology evidence="5">Multi-pass membrane protein</topology>
    </subcellularLocation>
</comment>
<comment type="developmental stage">
    <text evidence="4">Expressed in the prestalk cells types pstAB and pstAO or at the stalk entrance during culmination, this expression being absent in the dstA null mutant.</text>
</comment>
<comment type="similarity">
    <text evidence="5">Belongs to the ZIP transporter (TC 2.A.5) family.</text>
</comment>
<keyword id="KW-0406">Ion transport</keyword>
<keyword id="KW-0472">Membrane</keyword>
<keyword id="KW-0479">Metal-binding</keyword>
<keyword id="KW-1185">Reference proteome</keyword>
<keyword id="KW-0812">Transmembrane</keyword>
<keyword id="KW-1133">Transmembrane helix</keyword>
<keyword id="KW-0813">Transport</keyword>
<gene>
    <name type="primary">zntD</name>
    <name type="ORF">DDB_G0269326</name>
</gene>
<evidence type="ECO:0000250" key="1"/>
<evidence type="ECO:0000255" key="2"/>
<evidence type="ECO:0000256" key="3">
    <source>
        <dbReference type="SAM" id="MobiDB-lite"/>
    </source>
</evidence>
<evidence type="ECO:0000269" key="4">
    <source>
    </source>
</evidence>
<evidence type="ECO:0000305" key="5"/>
<organism>
    <name type="scientific">Dictyostelium discoideum</name>
    <name type="common">Social amoeba</name>
    <dbReference type="NCBI Taxonomy" id="44689"/>
    <lineage>
        <taxon>Eukaryota</taxon>
        <taxon>Amoebozoa</taxon>
        <taxon>Evosea</taxon>
        <taxon>Eumycetozoa</taxon>
        <taxon>Dictyostelia</taxon>
        <taxon>Dictyosteliales</taxon>
        <taxon>Dictyosteliaceae</taxon>
        <taxon>Dictyostelium</taxon>
    </lineage>
</organism>
<name>ZNTD_DICDI</name>
<feature type="chain" id="PRO_0000386636" description="Protein zntD">
    <location>
        <begin position="1"/>
        <end position="683"/>
    </location>
</feature>
<feature type="transmembrane region" description="Helical" evidence="2">
    <location>
        <begin position="12"/>
        <end position="32"/>
    </location>
</feature>
<feature type="transmembrane region" description="Helical" evidence="2">
    <location>
        <begin position="42"/>
        <end position="62"/>
    </location>
</feature>
<feature type="transmembrane region" description="Helical" evidence="2">
    <location>
        <begin position="79"/>
        <end position="99"/>
    </location>
</feature>
<feature type="transmembrane region" description="Helical" evidence="2">
    <location>
        <begin position="534"/>
        <end position="554"/>
    </location>
</feature>
<feature type="transmembrane region" description="Helical" evidence="2">
    <location>
        <begin position="564"/>
        <end position="584"/>
    </location>
</feature>
<feature type="transmembrane region" description="Helical" evidence="2">
    <location>
        <begin position="600"/>
        <end position="620"/>
    </location>
</feature>
<feature type="transmembrane region" description="Helical" evidence="2">
    <location>
        <begin position="631"/>
        <end position="651"/>
    </location>
</feature>
<feature type="transmembrane region" description="Helical" evidence="2">
    <location>
        <begin position="662"/>
        <end position="682"/>
    </location>
</feature>
<feature type="region of interest" description="Disordered" evidence="3">
    <location>
        <begin position="120"/>
        <end position="180"/>
    </location>
</feature>
<feature type="region of interest" description="Disordered" evidence="3">
    <location>
        <begin position="299"/>
        <end position="325"/>
    </location>
</feature>
<feature type="region of interest" description="Disordered" evidence="3">
    <location>
        <begin position="364"/>
        <end position="390"/>
    </location>
</feature>
<feature type="region of interest" description="Disordered" evidence="3">
    <location>
        <begin position="451"/>
        <end position="489"/>
    </location>
</feature>
<feature type="compositionally biased region" description="Basic residues" evidence="3">
    <location>
        <begin position="120"/>
        <end position="129"/>
    </location>
</feature>
<feature type="compositionally biased region" description="Gly residues" evidence="3">
    <location>
        <begin position="137"/>
        <end position="149"/>
    </location>
</feature>
<feature type="compositionally biased region" description="Low complexity" evidence="3">
    <location>
        <begin position="160"/>
        <end position="180"/>
    </location>
</feature>
<feature type="compositionally biased region" description="Low complexity" evidence="3">
    <location>
        <begin position="302"/>
        <end position="325"/>
    </location>
</feature>
<feature type="compositionally biased region" description="Low complexity" evidence="3">
    <location>
        <begin position="451"/>
        <end position="465"/>
    </location>
</feature>
<feature type="compositionally biased region" description="Gly residues" evidence="3">
    <location>
        <begin position="466"/>
        <end position="475"/>
    </location>
</feature>
<feature type="compositionally biased region" description="Low complexity" evidence="3">
    <location>
        <begin position="476"/>
        <end position="489"/>
    </location>
</feature>
<sequence>MGISLSVLDIKIISTTVLFILSLLAGIAPYWMRNLNNSSRYLSWSNTFAGGVFFGAGMLHLFATADEDLQPYVQKYNYPFAALCLCVGFLITLFLELIINSIFIKSNTFASLHGHSHSHVHLSHGHSHHGKDNGSNGNPGSGVGIGMGSVGALNSKKNKTTSPTITPTTPSEGTTTTTTTTTATTAATAKEIVLEDEDEDEEKDIMDEIIIPDDYDENDDEQIYKKKQSKCARTKFRKFIDTIPTFSSTSTSSTSSSTKISEKQRLLDSSNSYYYNQNKYKGIIGSHIDIDKSGSGVGGFSNNNNNNNNNNNNNNKNNNNNNNNNFRTEIIIQPISTTSNNSVHHYPSSSVNYHPFITTTTTTCSNDNSNSNNNNSSNNNSSSANITPNTNKILSSSKSLSYRYNGDDEEPDIIIDYDDIDYNQEGRTRGNSLGSDSNVHNERIVLINSGIGNSGNIGSNNNNNNNGGGGGGGGNSNIDYNDNEENNNNNNKIESEILIKDTTTDSIKNMKGGEHQHQHLHQQEIIVVTKKSNILLPFILVIALSIHSLFEGLAMGVQSSEIRVFDILIAIFAHKILASFALGISTITSSNEKPSFLKLFLLVFVFSLTSPIGSILGMVIVGSGVTGSMVPPILQGIASGTFLYVAVVEIIPKELSHDSNDILIKSFLLLLGFSGMAVVAIWV</sequence>
<proteinExistence type="evidence at transcript level"/>
<reference key="1">
    <citation type="journal article" date="2005" name="Nature">
        <title>The genome of the social amoeba Dictyostelium discoideum.</title>
        <authorList>
            <person name="Eichinger L."/>
            <person name="Pachebat J.A."/>
            <person name="Gloeckner G."/>
            <person name="Rajandream M.A."/>
            <person name="Sucgang R."/>
            <person name="Berriman M."/>
            <person name="Song J."/>
            <person name="Olsen R."/>
            <person name="Szafranski K."/>
            <person name="Xu Q."/>
            <person name="Tunggal B."/>
            <person name="Kummerfeld S."/>
            <person name="Madera M."/>
            <person name="Konfortov B.A."/>
            <person name="Rivero F."/>
            <person name="Bankier A.T."/>
            <person name="Lehmann R."/>
            <person name="Hamlin N."/>
            <person name="Davies R."/>
            <person name="Gaudet P."/>
            <person name="Fey P."/>
            <person name="Pilcher K."/>
            <person name="Chen G."/>
            <person name="Saunders D."/>
            <person name="Sodergren E.J."/>
            <person name="Davis P."/>
            <person name="Kerhornou A."/>
            <person name="Nie X."/>
            <person name="Hall N."/>
            <person name="Anjard C."/>
            <person name="Hemphill L."/>
            <person name="Bason N."/>
            <person name="Farbrother P."/>
            <person name="Desany B."/>
            <person name="Just E."/>
            <person name="Morio T."/>
            <person name="Rost R."/>
            <person name="Churcher C.M."/>
            <person name="Cooper J."/>
            <person name="Haydock S."/>
            <person name="van Driessche N."/>
            <person name="Cronin A."/>
            <person name="Goodhead I."/>
            <person name="Muzny D.M."/>
            <person name="Mourier T."/>
            <person name="Pain A."/>
            <person name="Lu M."/>
            <person name="Harper D."/>
            <person name="Lindsay R."/>
            <person name="Hauser H."/>
            <person name="James K.D."/>
            <person name="Quiles M."/>
            <person name="Madan Babu M."/>
            <person name="Saito T."/>
            <person name="Buchrieser C."/>
            <person name="Wardroper A."/>
            <person name="Felder M."/>
            <person name="Thangavelu M."/>
            <person name="Johnson D."/>
            <person name="Knights A."/>
            <person name="Loulseged H."/>
            <person name="Mungall K.L."/>
            <person name="Oliver K."/>
            <person name="Price C."/>
            <person name="Quail M.A."/>
            <person name="Urushihara H."/>
            <person name="Hernandez J."/>
            <person name="Rabbinowitsch E."/>
            <person name="Steffen D."/>
            <person name="Sanders M."/>
            <person name="Ma J."/>
            <person name="Kohara Y."/>
            <person name="Sharp S."/>
            <person name="Simmonds M.N."/>
            <person name="Spiegler S."/>
            <person name="Tivey A."/>
            <person name="Sugano S."/>
            <person name="White B."/>
            <person name="Walker D."/>
            <person name="Woodward J.R."/>
            <person name="Winckler T."/>
            <person name="Tanaka Y."/>
            <person name="Shaulsky G."/>
            <person name="Schleicher M."/>
            <person name="Weinstock G.M."/>
            <person name="Rosenthal A."/>
            <person name="Cox E.C."/>
            <person name="Chisholm R.L."/>
            <person name="Gibbs R.A."/>
            <person name="Loomis W.F."/>
            <person name="Platzer M."/>
            <person name="Kay R.R."/>
            <person name="Williams J.G."/>
            <person name="Dear P.H."/>
            <person name="Noegel A.A."/>
            <person name="Barrell B.G."/>
            <person name="Kuspa A."/>
        </authorList>
    </citation>
    <scope>NUCLEOTIDE SEQUENCE [LARGE SCALE GENOMIC DNA]</scope>
    <source>
        <strain>AX4</strain>
    </source>
</reference>
<reference key="2">
    <citation type="journal article" date="2008" name="Int. J. Dev. Biol.">
        <title>Expression of zinc transporter family genes in Dictyostelium.</title>
        <authorList>
            <person name="Sunaga N."/>
            <person name="Monna M."/>
            <person name="Shimada N."/>
            <person name="Tsukamoto M."/>
            <person name="Kawata T."/>
        </authorList>
    </citation>
    <scope>DEVELOPMENTAL STAGE</scope>
    <scope>FUNCTION</scope>
    <source>
        <strain>AX2</strain>
    </source>
</reference>
<dbReference type="EMBL" id="AAFI02000005">
    <property type="protein sequence ID" value="EAL72013.1"/>
    <property type="molecule type" value="Genomic_DNA"/>
</dbReference>
<dbReference type="RefSeq" id="XP_645880.1">
    <property type="nucleotide sequence ID" value="XM_640788.1"/>
</dbReference>
<dbReference type="FunCoup" id="Q55EA1">
    <property type="interactions" value="19"/>
</dbReference>
<dbReference type="STRING" id="44689.Q55EA1"/>
<dbReference type="PaxDb" id="44689-DDB0266640"/>
<dbReference type="EnsemblProtists" id="EAL72013">
    <property type="protein sequence ID" value="EAL72013"/>
    <property type="gene ID" value="DDB_G0269326"/>
</dbReference>
<dbReference type="GeneID" id="8616820"/>
<dbReference type="KEGG" id="ddi:DDB_G0269326"/>
<dbReference type="dictyBase" id="DDB_G0269326">
    <property type="gene designation" value="zplD"/>
</dbReference>
<dbReference type="VEuPathDB" id="AmoebaDB:DDB_G0269326"/>
<dbReference type="eggNOG" id="KOG1558">
    <property type="taxonomic scope" value="Eukaryota"/>
</dbReference>
<dbReference type="HOGENOM" id="CLU_403052_0_0_1"/>
<dbReference type="InParanoid" id="Q55EA1"/>
<dbReference type="OMA" id="QSKCART"/>
<dbReference type="Reactome" id="R-DDI-442380">
    <property type="pathway name" value="Zinc influx into cells by the SLC39 gene family"/>
</dbReference>
<dbReference type="PRO" id="PR:Q55EA1"/>
<dbReference type="Proteomes" id="UP000002195">
    <property type="component" value="Chromosome 1"/>
</dbReference>
<dbReference type="GO" id="GO:0005886">
    <property type="term" value="C:plasma membrane"/>
    <property type="evidence" value="ECO:0000318"/>
    <property type="project" value="GO_Central"/>
</dbReference>
<dbReference type="GO" id="GO:0046872">
    <property type="term" value="F:metal ion binding"/>
    <property type="evidence" value="ECO:0007669"/>
    <property type="project" value="UniProtKB-KW"/>
</dbReference>
<dbReference type="GO" id="GO:0005385">
    <property type="term" value="F:zinc ion transmembrane transporter activity"/>
    <property type="evidence" value="ECO:0000318"/>
    <property type="project" value="GO_Central"/>
</dbReference>
<dbReference type="GO" id="GO:0071577">
    <property type="term" value="P:zinc ion transmembrane transport"/>
    <property type="evidence" value="ECO:0000318"/>
    <property type="project" value="GO_Central"/>
</dbReference>
<dbReference type="InterPro" id="IPR003689">
    <property type="entry name" value="ZIP"/>
</dbReference>
<dbReference type="PANTHER" id="PTHR11040">
    <property type="entry name" value="ZINC/IRON TRANSPORTER"/>
    <property type="match status" value="1"/>
</dbReference>
<dbReference type="PANTHER" id="PTHR11040:SF140">
    <property type="entry name" value="ZRT (ZRT), IRT- (IRT-) LIKE PROTEIN TRANSPORTER"/>
    <property type="match status" value="1"/>
</dbReference>
<dbReference type="Pfam" id="PF02535">
    <property type="entry name" value="Zip"/>
    <property type="match status" value="2"/>
</dbReference>
<accession>Q55EA1</accession>